<feature type="chain" id="PRO_1000094876" description="Large-conductance mechanosensitive channel">
    <location>
        <begin position="1"/>
        <end position="140"/>
    </location>
</feature>
<feature type="transmembrane region" description="Helical" evidence="1">
    <location>
        <begin position="16"/>
        <end position="36"/>
    </location>
</feature>
<feature type="transmembrane region" description="Helical" evidence="1">
    <location>
        <begin position="86"/>
        <end position="106"/>
    </location>
</feature>
<accession>B4UD86</accession>
<keyword id="KW-0997">Cell inner membrane</keyword>
<keyword id="KW-1003">Cell membrane</keyword>
<keyword id="KW-0407">Ion channel</keyword>
<keyword id="KW-0406">Ion transport</keyword>
<keyword id="KW-0472">Membrane</keyword>
<keyword id="KW-0812">Transmembrane</keyword>
<keyword id="KW-1133">Transmembrane helix</keyword>
<keyword id="KW-0813">Transport</keyword>
<proteinExistence type="inferred from homology"/>
<comment type="function">
    <text evidence="1">Channel that opens in response to stretch forces in the membrane lipid bilayer. May participate in the regulation of osmotic pressure changes within the cell.</text>
</comment>
<comment type="subunit">
    <text evidence="1">Homopentamer.</text>
</comment>
<comment type="subcellular location">
    <subcellularLocation>
        <location evidence="1">Cell inner membrane</location>
        <topology evidence="1">Multi-pass membrane protein</topology>
    </subcellularLocation>
</comment>
<comment type="similarity">
    <text evidence="1">Belongs to the MscL family.</text>
</comment>
<evidence type="ECO:0000255" key="1">
    <source>
        <dbReference type="HAMAP-Rule" id="MF_00115"/>
    </source>
</evidence>
<dbReference type="EMBL" id="CP001131">
    <property type="protein sequence ID" value="ACG74884.1"/>
    <property type="molecule type" value="Genomic_DNA"/>
</dbReference>
<dbReference type="RefSeq" id="WP_012527651.1">
    <property type="nucleotide sequence ID" value="NC_011145.1"/>
</dbReference>
<dbReference type="SMR" id="B4UD86"/>
<dbReference type="KEGG" id="ank:AnaeK_3672"/>
<dbReference type="HOGENOM" id="CLU_095787_0_1_7"/>
<dbReference type="OrthoDB" id="9810350at2"/>
<dbReference type="Proteomes" id="UP000001871">
    <property type="component" value="Chromosome"/>
</dbReference>
<dbReference type="GO" id="GO:0005886">
    <property type="term" value="C:plasma membrane"/>
    <property type="evidence" value="ECO:0007669"/>
    <property type="project" value="UniProtKB-SubCell"/>
</dbReference>
<dbReference type="GO" id="GO:0008381">
    <property type="term" value="F:mechanosensitive monoatomic ion channel activity"/>
    <property type="evidence" value="ECO:0007669"/>
    <property type="project" value="UniProtKB-UniRule"/>
</dbReference>
<dbReference type="Gene3D" id="1.10.1200.120">
    <property type="entry name" value="Large-conductance mechanosensitive channel, MscL, domain 1"/>
    <property type="match status" value="1"/>
</dbReference>
<dbReference type="HAMAP" id="MF_00115">
    <property type="entry name" value="MscL"/>
    <property type="match status" value="1"/>
</dbReference>
<dbReference type="InterPro" id="IPR019823">
    <property type="entry name" value="Mechanosensitive_channel_CS"/>
</dbReference>
<dbReference type="InterPro" id="IPR001185">
    <property type="entry name" value="MS_channel"/>
</dbReference>
<dbReference type="InterPro" id="IPR037673">
    <property type="entry name" value="MSC/AndL"/>
</dbReference>
<dbReference type="InterPro" id="IPR036019">
    <property type="entry name" value="MscL_channel"/>
</dbReference>
<dbReference type="NCBIfam" id="TIGR00220">
    <property type="entry name" value="mscL"/>
    <property type="match status" value="1"/>
</dbReference>
<dbReference type="NCBIfam" id="NF001843">
    <property type="entry name" value="PRK00567.1-4"/>
    <property type="match status" value="1"/>
</dbReference>
<dbReference type="NCBIfam" id="NF010557">
    <property type="entry name" value="PRK13952.1"/>
    <property type="match status" value="1"/>
</dbReference>
<dbReference type="PANTHER" id="PTHR30266:SF2">
    <property type="entry name" value="LARGE-CONDUCTANCE MECHANOSENSITIVE CHANNEL"/>
    <property type="match status" value="1"/>
</dbReference>
<dbReference type="PANTHER" id="PTHR30266">
    <property type="entry name" value="MECHANOSENSITIVE CHANNEL MSCL"/>
    <property type="match status" value="1"/>
</dbReference>
<dbReference type="Pfam" id="PF01741">
    <property type="entry name" value="MscL"/>
    <property type="match status" value="1"/>
</dbReference>
<dbReference type="PRINTS" id="PR01264">
    <property type="entry name" value="MECHCHANNEL"/>
</dbReference>
<dbReference type="SUPFAM" id="SSF81330">
    <property type="entry name" value="Gated mechanosensitive channel"/>
    <property type="match status" value="1"/>
</dbReference>
<dbReference type="PROSITE" id="PS01327">
    <property type="entry name" value="MSCL"/>
    <property type="match status" value="1"/>
</dbReference>
<reference key="1">
    <citation type="submission" date="2008-08" db="EMBL/GenBank/DDBJ databases">
        <title>Complete sequence of Anaeromyxobacter sp. K.</title>
        <authorList>
            <consortium name="US DOE Joint Genome Institute"/>
            <person name="Lucas S."/>
            <person name="Copeland A."/>
            <person name="Lapidus A."/>
            <person name="Glavina del Rio T."/>
            <person name="Dalin E."/>
            <person name="Tice H."/>
            <person name="Bruce D."/>
            <person name="Goodwin L."/>
            <person name="Pitluck S."/>
            <person name="Saunders E."/>
            <person name="Brettin T."/>
            <person name="Detter J.C."/>
            <person name="Han C."/>
            <person name="Larimer F."/>
            <person name="Land M."/>
            <person name="Hauser L."/>
            <person name="Kyrpides N."/>
            <person name="Ovchinnikiva G."/>
            <person name="Beliaev A."/>
        </authorList>
    </citation>
    <scope>NUCLEOTIDE SEQUENCE [LARGE SCALE GENOMIC DNA]</scope>
    <source>
        <strain>K</strain>
    </source>
</reference>
<organism>
    <name type="scientific">Anaeromyxobacter sp. (strain K)</name>
    <dbReference type="NCBI Taxonomy" id="447217"/>
    <lineage>
        <taxon>Bacteria</taxon>
        <taxon>Pseudomonadati</taxon>
        <taxon>Myxococcota</taxon>
        <taxon>Myxococcia</taxon>
        <taxon>Myxococcales</taxon>
        <taxon>Cystobacterineae</taxon>
        <taxon>Anaeromyxobacteraceae</taxon>
        <taxon>Anaeromyxobacter</taxon>
    </lineage>
</organism>
<gene>
    <name evidence="1" type="primary">mscL</name>
    <name type="ordered locus">AnaeK_3672</name>
</gene>
<name>MSCL_ANASK</name>
<protein>
    <recommendedName>
        <fullName evidence="1">Large-conductance mechanosensitive channel</fullName>
    </recommendedName>
</protein>
<sequence>MSFASEFKAFALKGNVVDLAVGVIIGAAFGKIVDSIVNDLVMPVVGAIFGGLDFKDYFVALKEIPPGVPHALDAVKKAGVPVFAYGSFLTIVLNFLILAFIIFLMVKQFNRMKRAEPAPAPAAPPEQVVLLREIRDALRR</sequence>